<comment type="function">
    <text evidence="2">Part of a variant of the sulfo-TK pathway, a D-sulfoquinovose degradation pathway that produces sulfoacetate (PubMed:37404184). Hydrolyzes sulfoacetyl-coenzyme A (sulfoacetyl-CoA) to produce sulfoacetate and CoA coupled with the phosphorylation of ADP to generate ATP (PubMed:37404184). Cannot use succinate, acetate or 3-hydroxypropionate, and shows only residual activities with malonate and 3-sulfopropanoate (PubMed:37404184).</text>
</comment>
<comment type="catalytic activity">
    <reaction evidence="2">
        <text>sulfoacetate + ATP + CoA = sulfoacetyl-CoA + ADP + phosphate</text>
        <dbReference type="Rhea" id="RHEA:76683"/>
        <dbReference type="ChEBI" id="CHEBI:30616"/>
        <dbReference type="ChEBI" id="CHEBI:43474"/>
        <dbReference type="ChEBI" id="CHEBI:57287"/>
        <dbReference type="ChEBI" id="CHEBI:58824"/>
        <dbReference type="ChEBI" id="CHEBI:61994"/>
        <dbReference type="ChEBI" id="CHEBI:456216"/>
    </reaction>
    <physiologicalReaction direction="right-to-left" evidence="2">
        <dbReference type="Rhea" id="RHEA:76685"/>
    </physiologicalReaction>
</comment>
<comment type="cofactor">
    <cofactor evidence="2">
        <name>Mg(2+)</name>
        <dbReference type="ChEBI" id="CHEBI:18420"/>
    </cofactor>
    <text evidence="1">Binds 1 Mg(2+) ion per subunit.</text>
</comment>
<comment type="biophysicochemical properties">
    <kinetics>
        <KM evidence="2">0.15 mM for sulfoacetate</KM>
        <KM evidence="2">0.14 mM for ATP</KM>
        <KM evidence="2">0.07 mM for CoA</KM>
        <text evidence="2">kcat is 1.86 sec(-1) with sulfoacetate as substrate. kcat is 1.68 sec(-1) with ATP as substrate. kcat is 2.07 sec(-1) with CoA as substrate.</text>
    </kinetics>
    <phDependence>
        <text evidence="2">Optimum pH is 7.5.</text>
    </phDependence>
</comment>
<comment type="subunit">
    <text evidence="5">Forms a complex with SqwL.</text>
</comment>
<comment type="similarity">
    <text evidence="4">Belongs to the succinate/malate CoA ligase beta subunit family.</text>
</comment>
<evidence type="ECO:0000255" key="1">
    <source>
        <dbReference type="PROSITE-ProRule" id="PRU00409"/>
    </source>
</evidence>
<evidence type="ECO:0000269" key="2">
    <source>
    </source>
</evidence>
<evidence type="ECO:0000303" key="3">
    <source>
    </source>
</evidence>
<evidence type="ECO:0000305" key="4"/>
<evidence type="ECO:0000305" key="5">
    <source>
    </source>
</evidence>
<evidence type="ECO:0000312" key="6">
    <source>
        <dbReference type="EMBL" id="RJX24453.1"/>
    </source>
</evidence>
<feature type="chain" id="PRO_0000459083" description="ADP-forming sulfoacetate-CoA ligase subunit SqwK">
    <location>
        <begin position="1"/>
        <end position="401"/>
    </location>
</feature>
<feature type="domain" description="ATP-grasp" evidence="1">
    <location>
        <begin position="9"/>
        <end position="217"/>
    </location>
</feature>
<feature type="binding site" evidence="1">
    <location>
        <begin position="35"/>
        <end position="96"/>
    </location>
    <ligand>
        <name>ATP</name>
        <dbReference type="ChEBI" id="CHEBI:30616"/>
    </ligand>
</feature>
<feature type="binding site" evidence="1">
    <location>
        <position position="185"/>
    </location>
    <ligand>
        <name>Mg(2+)</name>
        <dbReference type="ChEBI" id="CHEBI:18420"/>
    </ligand>
</feature>
<feature type="binding site" evidence="1">
    <location>
        <position position="187"/>
    </location>
    <ligand>
        <name>Mg(2+)</name>
        <dbReference type="ChEBI" id="CHEBI:18420"/>
    </ligand>
</feature>
<dbReference type="EC" id="6.2.1.-" evidence="2"/>
<dbReference type="EMBL" id="QZKD01000037">
    <property type="protein sequence ID" value="RJX24453.1"/>
    <property type="molecule type" value="Genomic_DNA"/>
</dbReference>
<dbReference type="SMR" id="A0A3A6NE59"/>
<dbReference type="Proteomes" id="UP000269641">
    <property type="component" value="Unassembled WGS sequence"/>
</dbReference>
<dbReference type="GO" id="GO:0042709">
    <property type="term" value="C:succinate-CoA ligase complex"/>
    <property type="evidence" value="ECO:0007669"/>
    <property type="project" value="TreeGrafter"/>
</dbReference>
<dbReference type="GO" id="GO:0005524">
    <property type="term" value="F:ATP binding"/>
    <property type="evidence" value="ECO:0007669"/>
    <property type="project" value="UniProtKB-KW"/>
</dbReference>
<dbReference type="GO" id="GO:0046872">
    <property type="term" value="F:metal ion binding"/>
    <property type="evidence" value="ECO:0007669"/>
    <property type="project" value="UniProtKB-KW"/>
</dbReference>
<dbReference type="GO" id="GO:0004775">
    <property type="term" value="F:succinate-CoA ligase (ADP-forming) activity"/>
    <property type="evidence" value="ECO:0007669"/>
    <property type="project" value="TreeGrafter"/>
</dbReference>
<dbReference type="GO" id="GO:0006104">
    <property type="term" value="P:succinyl-CoA metabolic process"/>
    <property type="evidence" value="ECO:0007669"/>
    <property type="project" value="TreeGrafter"/>
</dbReference>
<dbReference type="GO" id="GO:0006099">
    <property type="term" value="P:tricarboxylic acid cycle"/>
    <property type="evidence" value="ECO:0007669"/>
    <property type="project" value="InterPro"/>
</dbReference>
<dbReference type="FunFam" id="3.30.470.20:FF:000002">
    <property type="entry name" value="Succinate--CoA ligase [ADP-forming] subunit beta"/>
    <property type="match status" value="1"/>
</dbReference>
<dbReference type="Gene3D" id="3.30.1490.20">
    <property type="entry name" value="ATP-grasp fold, A domain"/>
    <property type="match status" value="1"/>
</dbReference>
<dbReference type="Gene3D" id="3.30.470.20">
    <property type="entry name" value="ATP-grasp fold, B domain"/>
    <property type="match status" value="1"/>
</dbReference>
<dbReference type="Gene3D" id="3.40.50.261">
    <property type="entry name" value="Succinyl-CoA synthetase domains"/>
    <property type="match status" value="1"/>
</dbReference>
<dbReference type="InterPro" id="IPR011761">
    <property type="entry name" value="ATP-grasp"/>
</dbReference>
<dbReference type="InterPro" id="IPR013650">
    <property type="entry name" value="ATP-grasp_succ-CoA_synth-type"/>
</dbReference>
<dbReference type="InterPro" id="IPR013815">
    <property type="entry name" value="ATP_grasp_subdomain_1"/>
</dbReference>
<dbReference type="InterPro" id="IPR017866">
    <property type="entry name" value="Succ-CoA_synthase_bsu_CS"/>
</dbReference>
<dbReference type="InterPro" id="IPR005811">
    <property type="entry name" value="SUCC_ACL_C"/>
</dbReference>
<dbReference type="InterPro" id="IPR005809">
    <property type="entry name" value="Succ_CoA_ligase-like_bsu"/>
</dbReference>
<dbReference type="InterPro" id="IPR016102">
    <property type="entry name" value="Succinyl-CoA_synth-like"/>
</dbReference>
<dbReference type="PANTHER" id="PTHR11815:SF10">
    <property type="entry name" value="SUCCINATE--COA LIGASE [GDP-FORMING] SUBUNIT BETA, MITOCHONDRIAL"/>
    <property type="match status" value="1"/>
</dbReference>
<dbReference type="PANTHER" id="PTHR11815">
    <property type="entry name" value="SUCCINYL-COA SYNTHETASE BETA CHAIN"/>
    <property type="match status" value="1"/>
</dbReference>
<dbReference type="Pfam" id="PF08442">
    <property type="entry name" value="ATP-grasp_2"/>
    <property type="match status" value="1"/>
</dbReference>
<dbReference type="Pfam" id="PF00549">
    <property type="entry name" value="Ligase_CoA"/>
    <property type="match status" value="1"/>
</dbReference>
<dbReference type="PIRSF" id="PIRSF001554">
    <property type="entry name" value="SucCS_beta"/>
    <property type="match status" value="1"/>
</dbReference>
<dbReference type="SUPFAM" id="SSF56059">
    <property type="entry name" value="Glutathione synthetase ATP-binding domain-like"/>
    <property type="match status" value="1"/>
</dbReference>
<dbReference type="SUPFAM" id="SSF52210">
    <property type="entry name" value="Succinyl-CoA synthetase domains"/>
    <property type="match status" value="1"/>
</dbReference>
<dbReference type="PROSITE" id="PS50975">
    <property type="entry name" value="ATP_GRASP"/>
    <property type="match status" value="1"/>
</dbReference>
<dbReference type="PROSITE" id="PS01217">
    <property type="entry name" value="SUCCINYL_COA_LIG_3"/>
    <property type="match status" value="1"/>
</dbReference>
<gene>
    <name evidence="3" type="primary">sqwK</name>
    <name evidence="6" type="ORF">C4537_06705</name>
</gene>
<proteinExistence type="evidence at protein level"/>
<name>SQWK_ACHSX</name>
<sequence>MKLYEYQAKTVFSEHKIPTPKSILIQKEDTNPEVKSVGFPSVVKAQVLSGGRGKRGLIQLVKNENEALYQVKRLFEIEPSMKHLLIEEAVHIDKEIYVSITVDAPSGKAILIASESGGVEIETLAVEHPELIIKEPIDLRYGLLSHQARHIAYQMNLSVNQTKQMIQILMNIYEIFKKYDAELVEINPLFATKEDTLIAGDGKIMIDDNSVFRQPRFAQTETDYSSEAAYEASLEGIPFIQFDGDIGLMCAGAGLTTTVYDLIHYEGGTVANYLEFGGPNYKKAVKAMEICLKVPSKVILIVTFGTIARADVMAEGIVEAIKKLNPDRPIVTCIRGTNEAHAVELLKEAGLTPLFDTEEAVRTAVRLAKGEKRWVFLSIEKPKCVSKASRVVKEAFGPNIW</sequence>
<reference key="1">
    <citation type="journal article" date="2017" name="ISME J.">
        <title>Energy and carbon metabolisms in a deep terrestrial subsurface fluid microbial community.</title>
        <authorList>
            <person name="Momper L."/>
            <person name="Jungbluth S.P."/>
            <person name="Lee M.D."/>
            <person name="Amend J.P."/>
        </authorList>
    </citation>
    <scope>NUCLEOTIDE SEQUENCE [LARGE SCALE GENOMIC DNA]</scope>
    <source>
        <strain>SURF_22</strain>
    </source>
</reference>
<reference key="2">
    <citation type="journal article" date="2023" name="Appl. Environ. Microbiol.">
        <title>A variant of the sulfoglycolytic transketolase pathway for the degradation of sulfoquinovose into sulfoacetate.</title>
        <authorList>
            <person name="Chu R."/>
            <person name="Wei Y."/>
            <person name="Liu J."/>
            <person name="Li B."/>
            <person name="Zhang J."/>
            <person name="Zhou Y."/>
            <person name="Du Y."/>
            <person name="Zhang Y."/>
        </authorList>
    </citation>
    <scope>FUNCTION</scope>
    <scope>CATALYTIC ACTIVITY</scope>
    <scope>COFACTOR</scope>
    <scope>BIOPHYSICOCHEMICAL PROPERTIES</scope>
</reference>
<accession>A0A3A6NE59</accession>
<keyword id="KW-0067">ATP-binding</keyword>
<keyword id="KW-0119">Carbohydrate metabolism</keyword>
<keyword id="KW-0436">Ligase</keyword>
<keyword id="KW-0460">Magnesium</keyword>
<keyword id="KW-0479">Metal-binding</keyword>
<keyword id="KW-0547">Nucleotide-binding</keyword>
<organism>
    <name type="scientific">Acholeplasma sp</name>
    <dbReference type="NCBI Taxonomy" id="33015"/>
    <lineage>
        <taxon>Bacteria</taxon>
        <taxon>Bacillati</taxon>
        <taxon>Mycoplasmatota</taxon>
        <taxon>Mollicutes</taxon>
        <taxon>Acholeplasmatales</taxon>
        <taxon>Acholeplasmataceae</taxon>
        <taxon>Acholeplasma</taxon>
    </lineage>
</organism>
<protein>
    <recommendedName>
        <fullName evidence="3">ADP-forming sulfoacetate-CoA ligase subunit SqwK</fullName>
        <ecNumber evidence="2">6.2.1.-</ecNumber>
    </recommendedName>
    <alternativeName>
        <fullName evidence="4">ADP-forming sulfoacetate-CoA ligase subunit beta</fullName>
    </alternativeName>
</protein>